<evidence type="ECO:0000250" key="1"/>
<evidence type="ECO:0000255" key="2">
    <source>
        <dbReference type="HAMAP-Rule" id="MF_00100"/>
    </source>
</evidence>
<evidence type="ECO:0000256" key="3">
    <source>
        <dbReference type="SAM" id="MobiDB-lite"/>
    </source>
</evidence>
<proteinExistence type="inferred from homology"/>
<dbReference type="EMBL" id="CP001176">
    <property type="protein sequence ID" value="ACK61295.1"/>
    <property type="molecule type" value="Genomic_DNA"/>
</dbReference>
<dbReference type="RefSeq" id="WP_000036343.1">
    <property type="nucleotide sequence ID" value="NZ_VEHB01000002.1"/>
</dbReference>
<dbReference type="SMR" id="B7HDT6"/>
<dbReference type="KEGG" id="bcb:BCB4264_A3911"/>
<dbReference type="HOGENOM" id="CLU_006301_5_1_9"/>
<dbReference type="Proteomes" id="UP000007096">
    <property type="component" value="Chromosome"/>
</dbReference>
<dbReference type="GO" id="GO:0005829">
    <property type="term" value="C:cytosol"/>
    <property type="evidence" value="ECO:0007669"/>
    <property type="project" value="TreeGrafter"/>
</dbReference>
<dbReference type="GO" id="GO:0005525">
    <property type="term" value="F:GTP binding"/>
    <property type="evidence" value="ECO:0007669"/>
    <property type="project" value="UniProtKB-KW"/>
</dbReference>
<dbReference type="GO" id="GO:0003924">
    <property type="term" value="F:GTPase activity"/>
    <property type="evidence" value="ECO:0007669"/>
    <property type="project" value="UniProtKB-UniRule"/>
</dbReference>
<dbReference type="GO" id="GO:0003743">
    <property type="term" value="F:translation initiation factor activity"/>
    <property type="evidence" value="ECO:0007669"/>
    <property type="project" value="UniProtKB-UniRule"/>
</dbReference>
<dbReference type="CDD" id="cd01887">
    <property type="entry name" value="IF2_eIF5B"/>
    <property type="match status" value="1"/>
</dbReference>
<dbReference type="CDD" id="cd03702">
    <property type="entry name" value="IF2_mtIF2_II"/>
    <property type="match status" value="1"/>
</dbReference>
<dbReference type="CDD" id="cd03692">
    <property type="entry name" value="mtIF2_IVc"/>
    <property type="match status" value="1"/>
</dbReference>
<dbReference type="FunFam" id="1.10.10.2480:FF:000001">
    <property type="entry name" value="Translation initiation factor IF-2"/>
    <property type="match status" value="1"/>
</dbReference>
<dbReference type="FunFam" id="2.40.30.10:FF:000007">
    <property type="entry name" value="Translation initiation factor IF-2"/>
    <property type="match status" value="1"/>
</dbReference>
<dbReference type="FunFam" id="2.40.30.10:FF:000008">
    <property type="entry name" value="Translation initiation factor IF-2"/>
    <property type="match status" value="1"/>
</dbReference>
<dbReference type="FunFam" id="3.40.50.10050:FF:000001">
    <property type="entry name" value="Translation initiation factor IF-2"/>
    <property type="match status" value="1"/>
</dbReference>
<dbReference type="FunFam" id="3.40.50.300:FF:000019">
    <property type="entry name" value="Translation initiation factor IF-2"/>
    <property type="match status" value="1"/>
</dbReference>
<dbReference type="Gene3D" id="1.10.10.2480">
    <property type="match status" value="1"/>
</dbReference>
<dbReference type="Gene3D" id="3.40.50.300">
    <property type="entry name" value="P-loop containing nucleotide triphosphate hydrolases"/>
    <property type="match status" value="1"/>
</dbReference>
<dbReference type="Gene3D" id="2.40.30.10">
    <property type="entry name" value="Translation factors"/>
    <property type="match status" value="2"/>
</dbReference>
<dbReference type="Gene3D" id="3.40.50.10050">
    <property type="entry name" value="Translation initiation factor IF- 2, domain 3"/>
    <property type="match status" value="1"/>
</dbReference>
<dbReference type="HAMAP" id="MF_00100_B">
    <property type="entry name" value="IF_2_B"/>
    <property type="match status" value="1"/>
</dbReference>
<dbReference type="InterPro" id="IPR053905">
    <property type="entry name" value="EF-G-like_DII"/>
</dbReference>
<dbReference type="InterPro" id="IPR044145">
    <property type="entry name" value="IF2_II"/>
</dbReference>
<dbReference type="InterPro" id="IPR006847">
    <property type="entry name" value="IF2_N"/>
</dbReference>
<dbReference type="InterPro" id="IPR027417">
    <property type="entry name" value="P-loop_NTPase"/>
</dbReference>
<dbReference type="InterPro" id="IPR005225">
    <property type="entry name" value="Small_GTP-bd"/>
</dbReference>
<dbReference type="InterPro" id="IPR000795">
    <property type="entry name" value="T_Tr_GTP-bd_dom"/>
</dbReference>
<dbReference type="InterPro" id="IPR000178">
    <property type="entry name" value="TF_IF2_bacterial-like"/>
</dbReference>
<dbReference type="InterPro" id="IPR015760">
    <property type="entry name" value="TIF_IF2"/>
</dbReference>
<dbReference type="InterPro" id="IPR023115">
    <property type="entry name" value="TIF_IF2_dom3"/>
</dbReference>
<dbReference type="InterPro" id="IPR036925">
    <property type="entry name" value="TIF_IF2_dom3_sf"/>
</dbReference>
<dbReference type="InterPro" id="IPR009000">
    <property type="entry name" value="Transl_B-barrel_sf"/>
</dbReference>
<dbReference type="NCBIfam" id="TIGR00487">
    <property type="entry name" value="IF-2"/>
    <property type="match status" value="1"/>
</dbReference>
<dbReference type="NCBIfam" id="TIGR00231">
    <property type="entry name" value="small_GTP"/>
    <property type="match status" value="1"/>
</dbReference>
<dbReference type="PANTHER" id="PTHR43381:SF5">
    <property type="entry name" value="TR-TYPE G DOMAIN-CONTAINING PROTEIN"/>
    <property type="match status" value="1"/>
</dbReference>
<dbReference type="PANTHER" id="PTHR43381">
    <property type="entry name" value="TRANSLATION INITIATION FACTOR IF-2-RELATED"/>
    <property type="match status" value="1"/>
</dbReference>
<dbReference type="Pfam" id="PF22042">
    <property type="entry name" value="EF-G_D2"/>
    <property type="match status" value="1"/>
</dbReference>
<dbReference type="Pfam" id="PF00009">
    <property type="entry name" value="GTP_EFTU"/>
    <property type="match status" value="1"/>
</dbReference>
<dbReference type="Pfam" id="PF11987">
    <property type="entry name" value="IF-2"/>
    <property type="match status" value="1"/>
</dbReference>
<dbReference type="Pfam" id="PF04760">
    <property type="entry name" value="IF2_N"/>
    <property type="match status" value="2"/>
</dbReference>
<dbReference type="SUPFAM" id="SSF52156">
    <property type="entry name" value="Initiation factor IF2/eIF5b, domain 3"/>
    <property type="match status" value="1"/>
</dbReference>
<dbReference type="SUPFAM" id="SSF52540">
    <property type="entry name" value="P-loop containing nucleoside triphosphate hydrolases"/>
    <property type="match status" value="1"/>
</dbReference>
<dbReference type="SUPFAM" id="SSF50447">
    <property type="entry name" value="Translation proteins"/>
    <property type="match status" value="2"/>
</dbReference>
<dbReference type="PROSITE" id="PS51722">
    <property type="entry name" value="G_TR_2"/>
    <property type="match status" value="1"/>
</dbReference>
<dbReference type="PROSITE" id="PS01176">
    <property type="entry name" value="IF2"/>
    <property type="match status" value="1"/>
</dbReference>
<organism>
    <name type="scientific">Bacillus cereus (strain B4264)</name>
    <dbReference type="NCBI Taxonomy" id="405532"/>
    <lineage>
        <taxon>Bacteria</taxon>
        <taxon>Bacillati</taxon>
        <taxon>Bacillota</taxon>
        <taxon>Bacilli</taxon>
        <taxon>Bacillales</taxon>
        <taxon>Bacillaceae</taxon>
        <taxon>Bacillus</taxon>
        <taxon>Bacillus cereus group</taxon>
    </lineage>
</organism>
<accession>B7HDT6</accession>
<comment type="function">
    <text evidence="2">One of the essential components for the initiation of protein synthesis. Protects formylmethionyl-tRNA from spontaneous hydrolysis and promotes its binding to the 30S ribosomal subunits. Also involved in the hydrolysis of GTP during the formation of the 70S ribosomal complex.</text>
</comment>
<comment type="subcellular location">
    <subcellularLocation>
        <location evidence="2">Cytoplasm</location>
    </subcellularLocation>
</comment>
<comment type="similarity">
    <text evidence="2">Belongs to the TRAFAC class translation factor GTPase superfamily. Classic translation factor GTPase family. IF-2 subfamily.</text>
</comment>
<keyword id="KW-0963">Cytoplasm</keyword>
<keyword id="KW-0342">GTP-binding</keyword>
<keyword id="KW-0396">Initiation factor</keyword>
<keyword id="KW-0547">Nucleotide-binding</keyword>
<keyword id="KW-0648">Protein biosynthesis</keyword>
<feature type="chain" id="PRO_1000117322" description="Translation initiation factor IF-2">
    <location>
        <begin position="1"/>
        <end position="686"/>
    </location>
</feature>
<feature type="domain" description="tr-type G">
    <location>
        <begin position="188"/>
        <end position="357"/>
    </location>
</feature>
<feature type="region of interest" description="Disordered" evidence="3">
    <location>
        <begin position="61"/>
        <end position="98"/>
    </location>
</feature>
<feature type="region of interest" description="G1" evidence="1">
    <location>
        <begin position="197"/>
        <end position="204"/>
    </location>
</feature>
<feature type="region of interest" description="G2" evidence="1">
    <location>
        <begin position="222"/>
        <end position="226"/>
    </location>
</feature>
<feature type="region of interest" description="G3" evidence="1">
    <location>
        <begin position="243"/>
        <end position="246"/>
    </location>
</feature>
<feature type="region of interest" description="G4" evidence="1">
    <location>
        <begin position="297"/>
        <end position="300"/>
    </location>
</feature>
<feature type="region of interest" description="G5" evidence="1">
    <location>
        <begin position="333"/>
        <end position="335"/>
    </location>
</feature>
<feature type="compositionally biased region" description="Basic residues" evidence="3">
    <location>
        <begin position="69"/>
        <end position="81"/>
    </location>
</feature>
<feature type="binding site" evidence="2">
    <location>
        <begin position="197"/>
        <end position="204"/>
    </location>
    <ligand>
        <name>GTP</name>
        <dbReference type="ChEBI" id="CHEBI:37565"/>
    </ligand>
</feature>
<feature type="binding site" evidence="2">
    <location>
        <begin position="243"/>
        <end position="247"/>
    </location>
    <ligand>
        <name>GTP</name>
        <dbReference type="ChEBI" id="CHEBI:37565"/>
    </ligand>
</feature>
<feature type="binding site" evidence="2">
    <location>
        <begin position="297"/>
        <end position="300"/>
    </location>
    <ligand>
        <name>GTP</name>
        <dbReference type="ChEBI" id="CHEBI:37565"/>
    </ligand>
</feature>
<gene>
    <name evidence="2" type="primary">infB</name>
    <name type="ordered locus">BCB4264_A3911</name>
</gene>
<protein>
    <recommendedName>
        <fullName evidence="2">Translation initiation factor IF-2</fullName>
    </recommendedName>
</protein>
<reference key="1">
    <citation type="submission" date="2008-10" db="EMBL/GenBank/DDBJ databases">
        <title>Genome sequence of Bacillus cereus B4264.</title>
        <authorList>
            <person name="Dodson R.J."/>
            <person name="Durkin A.S."/>
            <person name="Rosovitz M.J."/>
            <person name="Rasko D.A."/>
            <person name="Hoffmaster A."/>
            <person name="Ravel J."/>
            <person name="Sutton G."/>
        </authorList>
    </citation>
    <scope>NUCLEOTIDE SEQUENCE [LARGE SCALE GENOMIC DNA]</scope>
    <source>
        <strain>B4264</strain>
    </source>
</reference>
<sequence>MSKIRVHEYAKKHNISSKDLMTKLKEMNIEVSNHMTMLDDEVVNKLDNEYQTEKPSVADEFEVEEKVVRSKKNSNKKKKKGKGNEDKRQENFAGRQQTQIVETPDKITFSGSLTVGDLAKKLSKEPSEIIKKLFMLGIMATINQDLDKDTIELIANDYGIEVEEEVIVSETEFETFIDEQDDEENLKERPAVVTIMGHVDHGKTTLLDSIRNSKVTAGEAGGITQHIGAYQVEVNDKKITFLDTPGHAAFTTMRARGAQVTDITILVVAADDGVMPQTVEAINHAKAAGVPIIVAVNKMDKPAANPDRVMQELTEYELVPEAWGGDTIFVPISAIQGEGIDNLLEMILLVSEVEEYKANPNRYATGTVIEAQLDKGKGTIATLLVQNGTLRVGDPIVVGTSFGRVRAMVSDIGRRVKVAGPSTPVEITGLNEVPQAGDRFMAFADEKKARQIGESRAQEALVAQRGEKSKLSLEDLFQQIQEGDVKEINLIVKADVQGSVEAMAASLRKIDVEGVKVKIIHTGVGAITESDIILASASNAIVIGFNVRPDVNAKRTAELENVDIRLHRIIYKVIEEIEAAMQGMLDPEFEEKVIGQAEVRQTFKVTKVGTIAGCYVTDGKITRDSGVRIIRDGVVIFEGQLDTLKRFKDDVKEVAQNYECGITIERYNDLKEGDIIEAYIMEEVKR</sequence>
<name>IF2_BACC4</name>